<proteinExistence type="inferred from homology"/>
<sequence length="844" mass="96026">MKCMVTNVLRSLIENDKGELRKLEKMADKVFSYADEMEALTDEQLQAKTAEFKERYNNGESLDDLLYEAYAVVREGARRVLGLYPYKVQVMGGIVLHNGDVPEMRTGEGKTLTATMPVYLNALSGQGVHVVTVNEYLSTRDATEMGELYSWLGLSVGINLAAKSPLEKREAYNCDITYSTNSEIGFDYLRDNMVVRAEDMVQRPLNYALVDEVDSILIDEARTPLIVSGAQGSETNQLYFLADNLVKSLTTEDYIIDIPSKTIGLSDSGIDKAEKFFKLDNLYDIENVAITHFLDNALRANYIMTYDIDYLVNEDQEVMIIDPFTGRTMEGRRYSDGLHQAIEAKEGVPVQNESKTSASITYQNLFRMYKKLSGMTGTGKTEEEEFREIYNIRVVPIPTNRPIARVDHEDLLYPSLEYKFNAVIADVKRRYEKGQPVLVGTVAVETSDLISQKLVAAGVPHEVLNAKNHYREAQIIMNAGQRGAVTIATNMAGRGTDIKLGPGVRELGGLCVIGTERHESRRIDNQLRGRSGRQGDPGESQFYLSLEDDLMKRFGSERIKVFMERMNLTEEESVIKSKMLTRQVESAQKRVEGNNYDSRKQVLQYDDVMREQREIIYRQRQDVITADRDLAPEIKAMMKRTIERQVAGHFLGSKDEAIDGIIKFAHANLVEDDTLSKATFEAMNQKEIVEELYERALRVYDSQVKKLRDEERVREFQKVLILRVVDNKWTDHIDALDQLRNAVSLRGYAQNNPIVEYQSEAFTMFNDMIGAIEFEVTRLMMKAQIHDNIERERTSQEAHTTAVKNIMPNQSHAIQENVSFEGVDRNDPCPCQSGKKFKNCHGRK</sequence>
<accession>A4W3N7</accession>
<name>SECA_STRS2</name>
<protein>
    <recommendedName>
        <fullName evidence="1">Protein translocase subunit SecA</fullName>
        <ecNumber evidence="1">7.4.2.8</ecNumber>
    </recommendedName>
</protein>
<organism>
    <name type="scientific">Streptococcus suis (strain 98HAH33)</name>
    <dbReference type="NCBI Taxonomy" id="391296"/>
    <lineage>
        <taxon>Bacteria</taxon>
        <taxon>Bacillati</taxon>
        <taxon>Bacillota</taxon>
        <taxon>Bacilli</taxon>
        <taxon>Lactobacillales</taxon>
        <taxon>Streptococcaceae</taxon>
        <taxon>Streptococcus</taxon>
    </lineage>
</organism>
<feature type="chain" id="PRO_0000318459" description="Protein translocase subunit SecA">
    <location>
        <begin position="1"/>
        <end position="844"/>
    </location>
</feature>
<feature type="binding site" evidence="1">
    <location>
        <position position="89"/>
    </location>
    <ligand>
        <name>ATP</name>
        <dbReference type="ChEBI" id="CHEBI:30616"/>
    </ligand>
</feature>
<feature type="binding site" evidence="1">
    <location>
        <begin position="107"/>
        <end position="111"/>
    </location>
    <ligand>
        <name>ATP</name>
        <dbReference type="ChEBI" id="CHEBI:30616"/>
    </ligand>
</feature>
<feature type="binding site" evidence="1">
    <location>
        <position position="497"/>
    </location>
    <ligand>
        <name>ATP</name>
        <dbReference type="ChEBI" id="CHEBI:30616"/>
    </ligand>
</feature>
<feature type="binding site" evidence="1">
    <location>
        <position position="829"/>
    </location>
    <ligand>
        <name>Zn(2+)</name>
        <dbReference type="ChEBI" id="CHEBI:29105"/>
    </ligand>
</feature>
<feature type="binding site" evidence="1">
    <location>
        <position position="831"/>
    </location>
    <ligand>
        <name>Zn(2+)</name>
        <dbReference type="ChEBI" id="CHEBI:29105"/>
    </ligand>
</feature>
<feature type="binding site" evidence="1">
    <location>
        <position position="840"/>
    </location>
    <ligand>
        <name>Zn(2+)</name>
        <dbReference type="ChEBI" id="CHEBI:29105"/>
    </ligand>
</feature>
<feature type="binding site" evidence="1">
    <location>
        <position position="841"/>
    </location>
    <ligand>
        <name>Zn(2+)</name>
        <dbReference type="ChEBI" id="CHEBI:29105"/>
    </ligand>
</feature>
<evidence type="ECO:0000255" key="1">
    <source>
        <dbReference type="HAMAP-Rule" id="MF_01382"/>
    </source>
</evidence>
<gene>
    <name evidence="1" type="primary">secA</name>
    <name type="ordered locus">SSU98_1818</name>
</gene>
<keyword id="KW-0067">ATP-binding</keyword>
<keyword id="KW-1003">Cell membrane</keyword>
<keyword id="KW-0963">Cytoplasm</keyword>
<keyword id="KW-0472">Membrane</keyword>
<keyword id="KW-0479">Metal-binding</keyword>
<keyword id="KW-0547">Nucleotide-binding</keyword>
<keyword id="KW-0653">Protein transport</keyword>
<keyword id="KW-1278">Translocase</keyword>
<keyword id="KW-0811">Translocation</keyword>
<keyword id="KW-0813">Transport</keyword>
<keyword id="KW-0862">Zinc</keyword>
<reference key="1">
    <citation type="journal article" date="2007" name="PLoS ONE">
        <title>A glimpse of streptococcal toxic shock syndrome from comparative genomics of S. suis 2 Chinese isolates.</title>
        <authorList>
            <person name="Chen C."/>
            <person name="Tang J."/>
            <person name="Dong W."/>
            <person name="Wang C."/>
            <person name="Feng Y."/>
            <person name="Wang J."/>
            <person name="Zheng F."/>
            <person name="Pan X."/>
            <person name="Liu D."/>
            <person name="Li M."/>
            <person name="Song Y."/>
            <person name="Zhu X."/>
            <person name="Sun H."/>
            <person name="Feng T."/>
            <person name="Guo Z."/>
            <person name="Ju A."/>
            <person name="Ge J."/>
            <person name="Dong Y."/>
            <person name="Sun W."/>
            <person name="Jiang Y."/>
            <person name="Wang J."/>
            <person name="Yan J."/>
            <person name="Yang H."/>
            <person name="Wang X."/>
            <person name="Gao G.F."/>
            <person name="Yang R."/>
            <person name="Wang J."/>
            <person name="Yu J."/>
        </authorList>
    </citation>
    <scope>NUCLEOTIDE SEQUENCE [LARGE SCALE GENOMIC DNA]</scope>
    <source>
        <strain>98HAH33</strain>
    </source>
</reference>
<comment type="function">
    <text evidence="1">Part of the Sec protein translocase complex. Interacts with the SecYEG preprotein conducting channel. Has a central role in coupling the hydrolysis of ATP to the transfer of proteins into and across the cell membrane, serving as an ATP-driven molecular motor driving the stepwise translocation of polypeptide chains across the membrane.</text>
</comment>
<comment type="catalytic activity">
    <reaction evidence="1">
        <text>ATP + H2O + cellular proteinSide 1 = ADP + phosphate + cellular proteinSide 2.</text>
        <dbReference type="EC" id="7.4.2.8"/>
    </reaction>
</comment>
<comment type="cofactor">
    <cofactor evidence="1">
        <name>Zn(2+)</name>
        <dbReference type="ChEBI" id="CHEBI:29105"/>
    </cofactor>
    <text evidence="1">May bind 1 zinc ion per subunit.</text>
</comment>
<comment type="subunit">
    <text evidence="1">Monomer and homodimer. Part of the essential Sec protein translocation apparatus which comprises SecA, SecYEG and auxiliary proteins SecDF. Other proteins may also be involved.</text>
</comment>
<comment type="subcellular location">
    <subcellularLocation>
        <location evidence="1">Cell membrane</location>
        <topology evidence="1">Peripheral membrane protein</topology>
        <orientation evidence="1">Cytoplasmic side</orientation>
    </subcellularLocation>
    <subcellularLocation>
        <location evidence="1">Cytoplasm</location>
    </subcellularLocation>
    <text evidence="1">Distribution is 50-50.</text>
</comment>
<comment type="similarity">
    <text evidence="1">Belongs to the SecA family.</text>
</comment>
<dbReference type="EC" id="7.4.2.8" evidence="1"/>
<dbReference type="EMBL" id="CP000408">
    <property type="protein sequence ID" value="ABP92976.1"/>
    <property type="molecule type" value="Genomic_DNA"/>
</dbReference>
<dbReference type="SMR" id="A4W3N7"/>
<dbReference type="KEGG" id="ssv:SSU98_1818"/>
<dbReference type="HOGENOM" id="CLU_005314_3_2_9"/>
<dbReference type="GO" id="GO:0031522">
    <property type="term" value="C:cell envelope Sec protein transport complex"/>
    <property type="evidence" value="ECO:0007669"/>
    <property type="project" value="TreeGrafter"/>
</dbReference>
<dbReference type="GO" id="GO:0005829">
    <property type="term" value="C:cytosol"/>
    <property type="evidence" value="ECO:0007669"/>
    <property type="project" value="TreeGrafter"/>
</dbReference>
<dbReference type="GO" id="GO:0005886">
    <property type="term" value="C:plasma membrane"/>
    <property type="evidence" value="ECO:0007669"/>
    <property type="project" value="UniProtKB-SubCell"/>
</dbReference>
<dbReference type="GO" id="GO:0005524">
    <property type="term" value="F:ATP binding"/>
    <property type="evidence" value="ECO:0007669"/>
    <property type="project" value="UniProtKB-UniRule"/>
</dbReference>
<dbReference type="GO" id="GO:0046872">
    <property type="term" value="F:metal ion binding"/>
    <property type="evidence" value="ECO:0007669"/>
    <property type="project" value="UniProtKB-KW"/>
</dbReference>
<dbReference type="GO" id="GO:0008564">
    <property type="term" value="F:protein-exporting ATPase activity"/>
    <property type="evidence" value="ECO:0007669"/>
    <property type="project" value="UniProtKB-EC"/>
</dbReference>
<dbReference type="GO" id="GO:0065002">
    <property type="term" value="P:intracellular protein transmembrane transport"/>
    <property type="evidence" value="ECO:0007669"/>
    <property type="project" value="UniProtKB-UniRule"/>
</dbReference>
<dbReference type="GO" id="GO:0017038">
    <property type="term" value="P:protein import"/>
    <property type="evidence" value="ECO:0007669"/>
    <property type="project" value="InterPro"/>
</dbReference>
<dbReference type="GO" id="GO:0006605">
    <property type="term" value="P:protein targeting"/>
    <property type="evidence" value="ECO:0007669"/>
    <property type="project" value="UniProtKB-UniRule"/>
</dbReference>
<dbReference type="GO" id="GO:0043952">
    <property type="term" value="P:protein transport by the Sec complex"/>
    <property type="evidence" value="ECO:0007669"/>
    <property type="project" value="TreeGrafter"/>
</dbReference>
<dbReference type="CDD" id="cd17928">
    <property type="entry name" value="DEXDc_SecA"/>
    <property type="match status" value="1"/>
</dbReference>
<dbReference type="CDD" id="cd18803">
    <property type="entry name" value="SF2_C_secA"/>
    <property type="match status" value="1"/>
</dbReference>
<dbReference type="FunFam" id="1.10.3060.10:FF:000002">
    <property type="entry name" value="Preprotein translocase subunit SecA"/>
    <property type="match status" value="1"/>
</dbReference>
<dbReference type="FunFam" id="3.40.50.300:FF:000429">
    <property type="entry name" value="Preprotein translocase subunit SecA"/>
    <property type="match status" value="1"/>
</dbReference>
<dbReference type="FunFam" id="3.90.1440.10:FF:000001">
    <property type="entry name" value="Preprotein translocase subunit SecA"/>
    <property type="match status" value="1"/>
</dbReference>
<dbReference type="Gene3D" id="1.10.3060.10">
    <property type="entry name" value="Helical scaffold and wing domains of SecA"/>
    <property type="match status" value="1"/>
</dbReference>
<dbReference type="Gene3D" id="3.40.50.300">
    <property type="entry name" value="P-loop containing nucleotide triphosphate hydrolases"/>
    <property type="match status" value="2"/>
</dbReference>
<dbReference type="Gene3D" id="3.90.1440.10">
    <property type="entry name" value="SecA, preprotein cross-linking domain"/>
    <property type="match status" value="1"/>
</dbReference>
<dbReference type="HAMAP" id="MF_01382">
    <property type="entry name" value="SecA"/>
    <property type="match status" value="1"/>
</dbReference>
<dbReference type="InterPro" id="IPR014001">
    <property type="entry name" value="Helicase_ATP-bd"/>
</dbReference>
<dbReference type="InterPro" id="IPR001650">
    <property type="entry name" value="Helicase_C-like"/>
</dbReference>
<dbReference type="InterPro" id="IPR027417">
    <property type="entry name" value="P-loop_NTPase"/>
</dbReference>
<dbReference type="InterPro" id="IPR004027">
    <property type="entry name" value="SEC_C_motif"/>
</dbReference>
<dbReference type="InterPro" id="IPR000185">
    <property type="entry name" value="SecA"/>
</dbReference>
<dbReference type="InterPro" id="IPR020937">
    <property type="entry name" value="SecA_CS"/>
</dbReference>
<dbReference type="InterPro" id="IPR011115">
    <property type="entry name" value="SecA_DEAD"/>
</dbReference>
<dbReference type="InterPro" id="IPR014018">
    <property type="entry name" value="SecA_motor_DEAD"/>
</dbReference>
<dbReference type="InterPro" id="IPR011130">
    <property type="entry name" value="SecA_preprotein_X-link_dom"/>
</dbReference>
<dbReference type="InterPro" id="IPR044722">
    <property type="entry name" value="SecA_SF2_C"/>
</dbReference>
<dbReference type="InterPro" id="IPR011116">
    <property type="entry name" value="SecA_Wing/Scaffold"/>
</dbReference>
<dbReference type="InterPro" id="IPR036266">
    <property type="entry name" value="SecA_Wing/Scaffold_sf"/>
</dbReference>
<dbReference type="InterPro" id="IPR036670">
    <property type="entry name" value="SecA_X-link_sf"/>
</dbReference>
<dbReference type="NCBIfam" id="NF006630">
    <property type="entry name" value="PRK09200.1"/>
    <property type="match status" value="1"/>
</dbReference>
<dbReference type="NCBIfam" id="TIGR00963">
    <property type="entry name" value="secA"/>
    <property type="match status" value="1"/>
</dbReference>
<dbReference type="PANTHER" id="PTHR30612:SF0">
    <property type="entry name" value="CHLOROPLAST PROTEIN-TRANSPORTING ATPASE"/>
    <property type="match status" value="1"/>
</dbReference>
<dbReference type="PANTHER" id="PTHR30612">
    <property type="entry name" value="SECA INNER MEMBRANE COMPONENT OF SEC PROTEIN SECRETION SYSTEM"/>
    <property type="match status" value="1"/>
</dbReference>
<dbReference type="Pfam" id="PF21090">
    <property type="entry name" value="P-loop_SecA"/>
    <property type="match status" value="2"/>
</dbReference>
<dbReference type="Pfam" id="PF02810">
    <property type="entry name" value="SEC-C"/>
    <property type="match status" value="1"/>
</dbReference>
<dbReference type="Pfam" id="PF07517">
    <property type="entry name" value="SecA_DEAD"/>
    <property type="match status" value="1"/>
</dbReference>
<dbReference type="Pfam" id="PF01043">
    <property type="entry name" value="SecA_PP_bind"/>
    <property type="match status" value="1"/>
</dbReference>
<dbReference type="Pfam" id="PF07516">
    <property type="entry name" value="SecA_SW"/>
    <property type="match status" value="1"/>
</dbReference>
<dbReference type="PRINTS" id="PR00906">
    <property type="entry name" value="SECA"/>
</dbReference>
<dbReference type="SMART" id="SM00957">
    <property type="entry name" value="SecA_DEAD"/>
    <property type="match status" value="1"/>
</dbReference>
<dbReference type="SMART" id="SM00958">
    <property type="entry name" value="SecA_PP_bind"/>
    <property type="match status" value="1"/>
</dbReference>
<dbReference type="SUPFAM" id="SSF81886">
    <property type="entry name" value="Helical scaffold and wing domains of SecA"/>
    <property type="match status" value="1"/>
</dbReference>
<dbReference type="SUPFAM" id="SSF52540">
    <property type="entry name" value="P-loop containing nucleoside triphosphate hydrolases"/>
    <property type="match status" value="2"/>
</dbReference>
<dbReference type="SUPFAM" id="SSF81767">
    <property type="entry name" value="Pre-protein crosslinking domain of SecA"/>
    <property type="match status" value="1"/>
</dbReference>
<dbReference type="PROSITE" id="PS01312">
    <property type="entry name" value="SECA"/>
    <property type="match status" value="1"/>
</dbReference>
<dbReference type="PROSITE" id="PS51196">
    <property type="entry name" value="SECA_MOTOR_DEAD"/>
    <property type="match status" value="1"/>
</dbReference>